<keyword id="KW-0002">3D-structure</keyword>
<keyword id="KW-0903">Direct protein sequencing</keyword>
<keyword id="KW-1015">Disulfide bond</keyword>
<keyword id="KW-0589">Pheromone response</keyword>
<keyword id="KW-0590">Pheromone-binding</keyword>
<keyword id="KW-1185">Reference proteome</keyword>
<keyword id="KW-0732">Signal</keyword>
<keyword id="KW-0813">Transport</keyword>
<comment type="function">
    <text>This major soluble protein in olfactory sensilla of male moths serves to solubilize the extremely hydrophobic pheromone molecules such as bombykol and to transport pheromone through the aqueous lymph to receptors located on olfactory cilia.</text>
</comment>
<comment type="subunit">
    <text evidence="2">Homodimer.</text>
</comment>
<comment type="tissue specificity">
    <text>Antenna.</text>
</comment>
<comment type="similarity">
    <text evidence="2">Belongs to the PBP/GOBP family.</text>
</comment>
<accession>P34174</accession>
<accession>Q17235</accession>
<protein>
    <recommendedName>
        <fullName>Pheromone-binding protein</fullName>
        <shortName>PBP</shortName>
    </recommendedName>
</protein>
<feature type="signal peptide" evidence="1">
    <location>
        <begin position="1"/>
        <end position="22"/>
    </location>
</feature>
<feature type="chain" id="PRO_0000012559" description="Pheromone-binding protein">
    <location>
        <begin position="23"/>
        <end position="164"/>
    </location>
</feature>
<feature type="disulfide bond">
    <location>
        <begin position="41"/>
        <end position="76"/>
    </location>
</feature>
<feature type="disulfide bond">
    <location>
        <begin position="72"/>
        <end position="130"/>
    </location>
</feature>
<feature type="disulfide bond">
    <location>
        <begin position="119"/>
        <end position="139"/>
    </location>
</feature>
<feature type="helix" evidence="3">
    <location>
        <begin position="24"/>
        <end position="35"/>
    </location>
</feature>
<feature type="helix" evidence="3">
    <location>
        <begin position="38"/>
        <end position="44"/>
    </location>
</feature>
<feature type="helix" evidence="3">
    <location>
        <begin position="51"/>
        <end position="56"/>
    </location>
</feature>
<feature type="turn" evidence="3">
    <location>
        <begin position="57"/>
        <end position="59"/>
    </location>
</feature>
<feature type="strand" evidence="5">
    <location>
        <begin position="60"/>
        <end position="62"/>
    </location>
</feature>
<feature type="helix" evidence="3">
    <location>
        <begin position="68"/>
        <end position="80"/>
    </location>
</feature>
<feature type="helix" evidence="6">
    <location>
        <begin position="81"/>
        <end position="83"/>
    </location>
</feature>
<feature type="strand" evidence="3">
    <location>
        <begin position="88"/>
        <end position="90"/>
    </location>
</feature>
<feature type="helix" evidence="3">
    <location>
        <begin position="92"/>
        <end position="101"/>
    </location>
</feature>
<feature type="helix" evidence="3">
    <location>
        <begin position="106"/>
        <end position="122"/>
    </location>
</feature>
<feature type="helix" evidence="3">
    <location>
        <begin position="129"/>
        <end position="146"/>
    </location>
</feature>
<feature type="strand" evidence="4">
    <location>
        <begin position="147"/>
        <end position="149"/>
    </location>
</feature>
<feature type="helix" evidence="6">
    <location>
        <begin position="153"/>
        <end position="163"/>
    </location>
</feature>
<organism>
    <name type="scientific">Bombyx mori</name>
    <name type="common">Silk moth</name>
    <dbReference type="NCBI Taxonomy" id="7091"/>
    <lineage>
        <taxon>Eukaryota</taxon>
        <taxon>Metazoa</taxon>
        <taxon>Ecdysozoa</taxon>
        <taxon>Arthropoda</taxon>
        <taxon>Hexapoda</taxon>
        <taxon>Insecta</taxon>
        <taxon>Pterygota</taxon>
        <taxon>Neoptera</taxon>
        <taxon>Endopterygota</taxon>
        <taxon>Lepidoptera</taxon>
        <taxon>Glossata</taxon>
        <taxon>Ditrysia</taxon>
        <taxon>Bombycoidea</taxon>
        <taxon>Bombycidae</taxon>
        <taxon>Bombycinae</taxon>
        <taxon>Bombyx</taxon>
    </lineage>
</organism>
<dbReference type="EMBL" id="X94987">
    <property type="protein sequence ID" value="CAA64443.1"/>
    <property type="molecule type" value="mRNA"/>
</dbReference>
<dbReference type="RefSeq" id="NP_001037494.1">
    <property type="nucleotide sequence ID" value="NM_001044029.1"/>
</dbReference>
<dbReference type="PDB" id="1DQE">
    <property type="method" value="X-ray"/>
    <property type="resolution" value="1.80 A"/>
    <property type="chains" value="A/B=23-159"/>
</dbReference>
<dbReference type="PDB" id="1GM0">
    <property type="method" value="NMR"/>
    <property type="chains" value="A=23-164"/>
</dbReference>
<dbReference type="PDB" id="1LS8">
    <property type="method" value="NMR"/>
    <property type="chains" value="A=23-164"/>
</dbReference>
<dbReference type="PDB" id="1XFR">
    <property type="method" value="NMR"/>
    <property type="chains" value="A=23-150"/>
</dbReference>
<dbReference type="PDB" id="2FJY">
    <property type="method" value="X-ray"/>
    <property type="resolution" value="2.30 A"/>
    <property type="chains" value="A/B=23-164"/>
</dbReference>
<dbReference type="PDB" id="2P70">
    <property type="method" value="X-ray"/>
    <property type="resolution" value="2.10 A"/>
    <property type="chains" value="A=23-154"/>
</dbReference>
<dbReference type="PDB" id="2P71">
    <property type="method" value="X-ray"/>
    <property type="resolution" value="2.01 A"/>
    <property type="chains" value="A=23-154"/>
</dbReference>
<dbReference type="PDBsum" id="1DQE"/>
<dbReference type="PDBsum" id="1GM0"/>
<dbReference type="PDBsum" id="1LS8"/>
<dbReference type="PDBsum" id="1XFR"/>
<dbReference type="PDBsum" id="2FJY"/>
<dbReference type="PDBsum" id="2P70"/>
<dbReference type="PDBsum" id="2P71"/>
<dbReference type="BMRB" id="P34174"/>
<dbReference type="SMR" id="P34174"/>
<dbReference type="FunCoup" id="P34174">
    <property type="interactions" value="62"/>
</dbReference>
<dbReference type="PaxDb" id="7091-BGIBMGA012615-TA"/>
<dbReference type="EnsemblMetazoa" id="NM_001044029.1">
    <property type="protein sequence ID" value="NP_001037494.1"/>
    <property type="gene ID" value="GeneID_693050"/>
</dbReference>
<dbReference type="GeneID" id="693050"/>
<dbReference type="KEGG" id="bmor:693050"/>
<dbReference type="CTD" id="693050"/>
<dbReference type="eggNOG" id="ENOG502TBQP">
    <property type="taxonomic scope" value="Eukaryota"/>
</dbReference>
<dbReference type="HOGENOM" id="CLU_1827210_0_0_1"/>
<dbReference type="InParanoid" id="P34174"/>
<dbReference type="OrthoDB" id="582610at7088"/>
<dbReference type="EvolutionaryTrace" id="P34174"/>
<dbReference type="Proteomes" id="UP000005204">
    <property type="component" value="Unassembled WGS sequence"/>
</dbReference>
<dbReference type="GO" id="GO:0005550">
    <property type="term" value="F:pheromone binding"/>
    <property type="evidence" value="ECO:0007669"/>
    <property type="project" value="UniProtKB-KW"/>
</dbReference>
<dbReference type="GO" id="GO:0019236">
    <property type="term" value="P:response to pheromone"/>
    <property type="evidence" value="ECO:0007669"/>
    <property type="project" value="UniProtKB-KW"/>
</dbReference>
<dbReference type="CDD" id="cd23992">
    <property type="entry name" value="PBP_GOBP"/>
    <property type="match status" value="1"/>
</dbReference>
<dbReference type="Gene3D" id="1.10.238.20">
    <property type="entry name" value="Pheromone/general odorant binding protein domain"/>
    <property type="match status" value="1"/>
</dbReference>
<dbReference type="InterPro" id="IPR006072">
    <property type="entry name" value="Odorant/phero-bd_Lep"/>
</dbReference>
<dbReference type="InterPro" id="IPR006170">
    <property type="entry name" value="PBP/GOBP"/>
</dbReference>
<dbReference type="InterPro" id="IPR036728">
    <property type="entry name" value="PBP_GOBP_sf"/>
</dbReference>
<dbReference type="Pfam" id="PF01395">
    <property type="entry name" value="PBP_GOBP"/>
    <property type="match status" value="1"/>
</dbReference>
<dbReference type="PIRSF" id="PIRSF015604">
    <property type="entry name" value="Odorant/phero_bd"/>
    <property type="match status" value="1"/>
</dbReference>
<dbReference type="PRINTS" id="PR00484">
    <property type="entry name" value="PBPGOBP"/>
</dbReference>
<dbReference type="SMART" id="SM00708">
    <property type="entry name" value="PhBP"/>
    <property type="match status" value="1"/>
</dbReference>
<dbReference type="SUPFAM" id="SSF47565">
    <property type="entry name" value="Insect pheromone/odorant-binding proteins"/>
    <property type="match status" value="1"/>
</dbReference>
<evidence type="ECO:0000269" key="1">
    <source>
    </source>
</evidence>
<evidence type="ECO:0000305" key="2"/>
<evidence type="ECO:0007829" key="3">
    <source>
        <dbReference type="PDB" id="1DQE"/>
    </source>
</evidence>
<evidence type="ECO:0007829" key="4">
    <source>
        <dbReference type="PDB" id="1GM0"/>
    </source>
</evidence>
<evidence type="ECO:0007829" key="5">
    <source>
        <dbReference type="PDB" id="1LS8"/>
    </source>
</evidence>
<evidence type="ECO:0007829" key="6">
    <source>
        <dbReference type="PDB" id="2FJY"/>
    </source>
</evidence>
<name>PBP_BOMMO</name>
<proteinExistence type="evidence at protein level"/>
<reference key="1">
    <citation type="journal article" date="1996" name="Insect Biochem. Mol. Biol.">
        <title>Binding proteins from the antennae of Bombyx mori.</title>
        <authorList>
            <person name="Krieger J."/>
            <person name="von Nickisch-Rosenegk E."/>
            <person name="Mameli M."/>
            <person name="Pelosi P."/>
            <person name="Breer H."/>
        </authorList>
    </citation>
    <scope>NUCLEOTIDE SEQUENCE [MRNA]</scope>
    <source>
        <tissue>Antenna</tissue>
    </source>
</reference>
<reference key="2">
    <citation type="journal article" date="1991" name="J. Neurobiol.">
        <title>Odorant-binding-protein subfamilies associate with distinct classes of olfactory receptor neurons in insects.</title>
        <authorList>
            <person name="Vogt R.G."/>
            <person name="Prestwich G.D."/>
            <person name="Lerner M.R."/>
        </authorList>
    </citation>
    <scope>PROTEIN SEQUENCE OF 23-57</scope>
</reference>
<reference key="3">
    <citation type="journal article" date="2000" name="Chem. Biol.">
        <title>Sexual attraction in the silkworm moth: structure of the pheromone-binding-protein-bombykol complex.</title>
        <authorList>
            <person name="Sandler B.H."/>
            <person name="Nikonova L."/>
            <person name="Leal W.S."/>
            <person name="Clardy J."/>
        </authorList>
    </citation>
    <scope>X-RAY CRYSTALLOGRAPHY (1.8 ANGSTROMS)</scope>
</reference>
<sequence length="164" mass="18086">MSIQGQIALALMVNMAVGSVDASQEVMKNLSLNFGKALDECKKEMTLTDAINEDFYNFWKEGYEIKNRETGCAIMCLSTKLNMLDPEGNLHHGNAMEFAKKHGADETMAQQLIDIVHGCEKSTPANDDKCIWTLGVATCFKAEIHKLNWAPSMDVAVGEILAEV</sequence>